<evidence type="ECO:0000255" key="1">
    <source>
        <dbReference type="HAMAP-Rule" id="MF_00508"/>
    </source>
</evidence>
<evidence type="ECO:0000305" key="2"/>
<keyword id="KW-0687">Ribonucleoprotein</keyword>
<keyword id="KW-0689">Ribosomal protein</keyword>
<proteinExistence type="inferred from homology"/>
<organism>
    <name type="scientific">Leptospira interrogans serogroup Icterohaemorrhagiae serovar copenhageni (strain Fiocruz L1-130)</name>
    <dbReference type="NCBI Taxonomy" id="267671"/>
    <lineage>
        <taxon>Bacteria</taxon>
        <taxon>Pseudomonadati</taxon>
        <taxon>Spirochaetota</taxon>
        <taxon>Spirochaetia</taxon>
        <taxon>Leptospirales</taxon>
        <taxon>Leptospiraceae</taxon>
        <taxon>Leptospira</taxon>
    </lineage>
</organism>
<comment type="function">
    <text evidence="1">Involved in the binding of tRNA to the ribosomes.</text>
</comment>
<comment type="subunit">
    <text evidence="1">Part of the 30S ribosomal subunit.</text>
</comment>
<comment type="similarity">
    <text evidence="1">Belongs to the universal ribosomal protein uS10 family.</text>
</comment>
<protein>
    <recommendedName>
        <fullName evidence="1">Small ribosomal subunit protein uS10</fullName>
    </recommendedName>
    <alternativeName>
        <fullName evidence="2">30S ribosomal protein S10</fullName>
    </alternativeName>
</protein>
<gene>
    <name evidence="1" type="primary">rpsJ</name>
    <name type="ordered locus">LIC_12874</name>
</gene>
<dbReference type="EMBL" id="AE016823">
    <property type="protein sequence ID" value="AAS71427.1"/>
    <property type="molecule type" value="Genomic_DNA"/>
</dbReference>
<dbReference type="RefSeq" id="WP_000918607.1">
    <property type="nucleotide sequence ID" value="NC_005823.1"/>
</dbReference>
<dbReference type="SMR" id="Q72NG0"/>
<dbReference type="GeneID" id="61172949"/>
<dbReference type="KEGG" id="lic:LIC_12874"/>
<dbReference type="HOGENOM" id="CLU_122625_1_3_12"/>
<dbReference type="Proteomes" id="UP000007037">
    <property type="component" value="Chromosome I"/>
</dbReference>
<dbReference type="GO" id="GO:1990904">
    <property type="term" value="C:ribonucleoprotein complex"/>
    <property type="evidence" value="ECO:0007669"/>
    <property type="project" value="UniProtKB-KW"/>
</dbReference>
<dbReference type="GO" id="GO:0005840">
    <property type="term" value="C:ribosome"/>
    <property type="evidence" value="ECO:0007669"/>
    <property type="project" value="UniProtKB-KW"/>
</dbReference>
<dbReference type="GO" id="GO:0003735">
    <property type="term" value="F:structural constituent of ribosome"/>
    <property type="evidence" value="ECO:0007669"/>
    <property type="project" value="InterPro"/>
</dbReference>
<dbReference type="GO" id="GO:0000049">
    <property type="term" value="F:tRNA binding"/>
    <property type="evidence" value="ECO:0007669"/>
    <property type="project" value="UniProtKB-UniRule"/>
</dbReference>
<dbReference type="GO" id="GO:0006412">
    <property type="term" value="P:translation"/>
    <property type="evidence" value="ECO:0007669"/>
    <property type="project" value="UniProtKB-UniRule"/>
</dbReference>
<dbReference type="FunFam" id="3.30.70.600:FF:000001">
    <property type="entry name" value="30S ribosomal protein S10"/>
    <property type="match status" value="1"/>
</dbReference>
<dbReference type="Gene3D" id="3.30.70.600">
    <property type="entry name" value="Ribosomal protein S10 domain"/>
    <property type="match status" value="1"/>
</dbReference>
<dbReference type="HAMAP" id="MF_00508">
    <property type="entry name" value="Ribosomal_uS10"/>
    <property type="match status" value="1"/>
</dbReference>
<dbReference type="InterPro" id="IPR001848">
    <property type="entry name" value="Ribosomal_uS10"/>
</dbReference>
<dbReference type="InterPro" id="IPR018268">
    <property type="entry name" value="Ribosomal_uS10_CS"/>
</dbReference>
<dbReference type="InterPro" id="IPR027486">
    <property type="entry name" value="Ribosomal_uS10_dom"/>
</dbReference>
<dbReference type="InterPro" id="IPR036838">
    <property type="entry name" value="Ribosomal_uS10_dom_sf"/>
</dbReference>
<dbReference type="NCBIfam" id="NF001861">
    <property type="entry name" value="PRK00596.1"/>
    <property type="match status" value="1"/>
</dbReference>
<dbReference type="NCBIfam" id="TIGR01049">
    <property type="entry name" value="rpsJ_bact"/>
    <property type="match status" value="1"/>
</dbReference>
<dbReference type="PANTHER" id="PTHR11700">
    <property type="entry name" value="30S RIBOSOMAL PROTEIN S10 FAMILY MEMBER"/>
    <property type="match status" value="1"/>
</dbReference>
<dbReference type="Pfam" id="PF00338">
    <property type="entry name" value="Ribosomal_S10"/>
    <property type="match status" value="1"/>
</dbReference>
<dbReference type="PRINTS" id="PR00971">
    <property type="entry name" value="RIBOSOMALS10"/>
</dbReference>
<dbReference type="SMART" id="SM01403">
    <property type="entry name" value="Ribosomal_S10"/>
    <property type="match status" value="1"/>
</dbReference>
<dbReference type="SUPFAM" id="SSF54999">
    <property type="entry name" value="Ribosomal protein S10"/>
    <property type="match status" value="1"/>
</dbReference>
<dbReference type="PROSITE" id="PS00361">
    <property type="entry name" value="RIBOSOMAL_S10"/>
    <property type="match status" value="1"/>
</dbReference>
<reference key="1">
    <citation type="journal article" date="2004" name="J. Bacteriol.">
        <title>Comparative genomics of two Leptospira interrogans serovars reveals novel insights into physiology and pathogenesis.</title>
        <authorList>
            <person name="Nascimento A.L.T.O."/>
            <person name="Ko A.I."/>
            <person name="Martins E.A.L."/>
            <person name="Monteiro-Vitorello C.B."/>
            <person name="Ho P.L."/>
            <person name="Haake D.A."/>
            <person name="Verjovski-Almeida S."/>
            <person name="Hartskeerl R.A."/>
            <person name="Marques M.V."/>
            <person name="Oliveira M.C."/>
            <person name="Menck C.F.M."/>
            <person name="Leite L.C.C."/>
            <person name="Carrer H."/>
            <person name="Coutinho L.L."/>
            <person name="Degrave W.M."/>
            <person name="Dellagostin O.A."/>
            <person name="El-Dorry H."/>
            <person name="Ferro E.S."/>
            <person name="Ferro M.I.T."/>
            <person name="Furlan L.R."/>
            <person name="Gamberini M."/>
            <person name="Giglioti E.A."/>
            <person name="Goes-Neto A."/>
            <person name="Goldman G.H."/>
            <person name="Goldman M.H.S."/>
            <person name="Harakava R."/>
            <person name="Jeronimo S.M.B."/>
            <person name="Junqueira-de-Azevedo I.L.M."/>
            <person name="Kimura E.T."/>
            <person name="Kuramae E.E."/>
            <person name="Lemos E.G.M."/>
            <person name="Lemos M.V.F."/>
            <person name="Marino C.L."/>
            <person name="Nunes L.R."/>
            <person name="de Oliveira R.C."/>
            <person name="Pereira G.G."/>
            <person name="Reis M.S."/>
            <person name="Schriefer A."/>
            <person name="Siqueira W.J."/>
            <person name="Sommer P."/>
            <person name="Tsai S.M."/>
            <person name="Simpson A.J.G."/>
            <person name="Ferro J.A."/>
            <person name="Camargo L.E.A."/>
            <person name="Kitajima J.P."/>
            <person name="Setubal J.C."/>
            <person name="Van Sluys M.A."/>
        </authorList>
    </citation>
    <scope>NUCLEOTIDE SEQUENCE [LARGE SCALE GENOMIC DNA]</scope>
    <source>
        <strain>Fiocruz L1-130</strain>
    </source>
</reference>
<accession>Q72NG0</accession>
<sequence length="102" mass="11467">MAGQKIRVKLKAFDHRLIDQSTYEIVATAKRTGATVSGPIPLPTKKEIYTVLRSPHVNKKSREQFELKTHKRLIDILDTNEDTVEALMKLQLPAGVSVDIKS</sequence>
<name>RS10_LEPIC</name>
<feature type="chain" id="PRO_0000146544" description="Small ribosomal subunit protein uS10">
    <location>
        <begin position="1"/>
        <end position="102"/>
    </location>
</feature>